<dbReference type="EC" id="2.7.1.167" evidence="1"/>
<dbReference type="EC" id="2.7.7.70" evidence="1"/>
<dbReference type="EMBL" id="CP000250">
    <property type="protein sequence ID" value="ABD06313.1"/>
    <property type="molecule type" value="Genomic_DNA"/>
</dbReference>
<dbReference type="RefSeq" id="WP_011440501.1">
    <property type="nucleotide sequence ID" value="NC_007778.1"/>
</dbReference>
<dbReference type="SMR" id="Q2IZP7"/>
<dbReference type="STRING" id="316058.RPB_1603"/>
<dbReference type="KEGG" id="rpb:RPB_1603"/>
<dbReference type="eggNOG" id="COG0615">
    <property type="taxonomic scope" value="Bacteria"/>
</dbReference>
<dbReference type="eggNOG" id="COG2870">
    <property type="taxonomic scope" value="Bacteria"/>
</dbReference>
<dbReference type="HOGENOM" id="CLU_021150_2_1_5"/>
<dbReference type="OrthoDB" id="9802794at2"/>
<dbReference type="UniPathway" id="UPA00356">
    <property type="reaction ID" value="UER00437"/>
</dbReference>
<dbReference type="UniPathway" id="UPA00356">
    <property type="reaction ID" value="UER00439"/>
</dbReference>
<dbReference type="Proteomes" id="UP000008809">
    <property type="component" value="Chromosome"/>
</dbReference>
<dbReference type="GO" id="GO:0005829">
    <property type="term" value="C:cytosol"/>
    <property type="evidence" value="ECO:0007669"/>
    <property type="project" value="TreeGrafter"/>
</dbReference>
<dbReference type="GO" id="GO:0005524">
    <property type="term" value="F:ATP binding"/>
    <property type="evidence" value="ECO:0007669"/>
    <property type="project" value="UniProtKB-UniRule"/>
</dbReference>
<dbReference type="GO" id="GO:0033785">
    <property type="term" value="F:heptose 7-phosphate kinase activity"/>
    <property type="evidence" value="ECO:0007669"/>
    <property type="project" value="UniProtKB-UniRule"/>
</dbReference>
<dbReference type="GO" id="GO:0033786">
    <property type="term" value="F:heptose-1-phosphate adenylyltransferase activity"/>
    <property type="evidence" value="ECO:0007669"/>
    <property type="project" value="UniProtKB-UniRule"/>
</dbReference>
<dbReference type="GO" id="GO:0016773">
    <property type="term" value="F:phosphotransferase activity, alcohol group as acceptor"/>
    <property type="evidence" value="ECO:0007669"/>
    <property type="project" value="InterPro"/>
</dbReference>
<dbReference type="GO" id="GO:0097171">
    <property type="term" value="P:ADP-L-glycero-beta-D-manno-heptose biosynthetic process"/>
    <property type="evidence" value="ECO:0007669"/>
    <property type="project" value="UniProtKB-UniPathway"/>
</dbReference>
<dbReference type="CDD" id="cd01172">
    <property type="entry name" value="RfaE_like"/>
    <property type="match status" value="1"/>
</dbReference>
<dbReference type="Gene3D" id="3.40.1190.20">
    <property type="match status" value="1"/>
</dbReference>
<dbReference type="Gene3D" id="3.40.50.620">
    <property type="entry name" value="HUPs"/>
    <property type="match status" value="1"/>
</dbReference>
<dbReference type="HAMAP" id="MF_01603">
    <property type="entry name" value="HldE"/>
    <property type="match status" value="1"/>
</dbReference>
<dbReference type="InterPro" id="IPR023030">
    <property type="entry name" value="Bifunc_HldE"/>
</dbReference>
<dbReference type="InterPro" id="IPR002173">
    <property type="entry name" value="Carboh/pur_kinase_PfkB_CS"/>
</dbReference>
<dbReference type="InterPro" id="IPR004821">
    <property type="entry name" value="Cyt_trans-like"/>
</dbReference>
<dbReference type="InterPro" id="IPR011611">
    <property type="entry name" value="PfkB_dom"/>
</dbReference>
<dbReference type="InterPro" id="IPR011913">
    <property type="entry name" value="RfaE_dom_I"/>
</dbReference>
<dbReference type="InterPro" id="IPR011914">
    <property type="entry name" value="RfaE_dom_II"/>
</dbReference>
<dbReference type="InterPro" id="IPR029056">
    <property type="entry name" value="Ribokinase-like"/>
</dbReference>
<dbReference type="InterPro" id="IPR014729">
    <property type="entry name" value="Rossmann-like_a/b/a_fold"/>
</dbReference>
<dbReference type="NCBIfam" id="TIGR00125">
    <property type="entry name" value="cyt_tran_rel"/>
    <property type="match status" value="1"/>
</dbReference>
<dbReference type="NCBIfam" id="TIGR02198">
    <property type="entry name" value="rfaE_dom_I"/>
    <property type="match status" value="1"/>
</dbReference>
<dbReference type="NCBIfam" id="TIGR02199">
    <property type="entry name" value="rfaE_dom_II"/>
    <property type="match status" value="1"/>
</dbReference>
<dbReference type="PANTHER" id="PTHR46969">
    <property type="entry name" value="BIFUNCTIONAL PROTEIN HLDE"/>
    <property type="match status" value="1"/>
</dbReference>
<dbReference type="PANTHER" id="PTHR46969:SF1">
    <property type="entry name" value="BIFUNCTIONAL PROTEIN HLDE"/>
    <property type="match status" value="1"/>
</dbReference>
<dbReference type="Pfam" id="PF01467">
    <property type="entry name" value="CTP_transf_like"/>
    <property type="match status" value="1"/>
</dbReference>
<dbReference type="Pfam" id="PF00294">
    <property type="entry name" value="PfkB"/>
    <property type="match status" value="1"/>
</dbReference>
<dbReference type="SUPFAM" id="SSF52374">
    <property type="entry name" value="Nucleotidylyl transferase"/>
    <property type="match status" value="1"/>
</dbReference>
<dbReference type="SUPFAM" id="SSF53613">
    <property type="entry name" value="Ribokinase-like"/>
    <property type="match status" value="1"/>
</dbReference>
<dbReference type="PROSITE" id="PS00583">
    <property type="entry name" value="PFKB_KINASES_1"/>
    <property type="match status" value="1"/>
</dbReference>
<name>HLDE_RHOP2</name>
<feature type="chain" id="PRO_0000255778" description="Bifunctional protein HldE">
    <location>
        <begin position="1"/>
        <end position="490"/>
    </location>
</feature>
<feature type="region of interest" description="Ribokinase">
    <location>
        <begin position="1"/>
        <end position="330"/>
    </location>
</feature>
<feature type="region of interest" description="Cytidylyltransferase">
    <location>
        <begin position="358"/>
        <end position="490"/>
    </location>
</feature>
<feature type="active site" evidence="1">
    <location>
        <position position="275"/>
    </location>
</feature>
<feature type="binding site" evidence="1">
    <location>
        <begin position="205"/>
        <end position="208"/>
    </location>
    <ligand>
        <name>ATP</name>
        <dbReference type="ChEBI" id="CHEBI:30616"/>
    </ligand>
</feature>
<evidence type="ECO:0000255" key="1">
    <source>
        <dbReference type="HAMAP-Rule" id="MF_01603"/>
    </source>
</evidence>
<keyword id="KW-0067">ATP-binding</keyword>
<keyword id="KW-0119">Carbohydrate metabolism</keyword>
<keyword id="KW-0418">Kinase</keyword>
<keyword id="KW-0511">Multifunctional enzyme</keyword>
<keyword id="KW-0547">Nucleotide-binding</keyword>
<keyword id="KW-0548">Nucleotidyltransferase</keyword>
<keyword id="KW-1185">Reference proteome</keyword>
<keyword id="KW-0808">Transferase</keyword>
<gene>
    <name evidence="1" type="primary">hldE</name>
    <name type="ordered locus">RPB_1603</name>
</gene>
<comment type="function">
    <text evidence="1">Catalyzes the phosphorylation of D-glycero-D-manno-heptose 7-phosphate at the C-1 position to selectively form D-glycero-beta-D-manno-heptose-1,7-bisphosphate.</text>
</comment>
<comment type="function">
    <text evidence="1">Catalyzes the ADP transfer from ATP to D-glycero-beta-D-manno-heptose 1-phosphate, yielding ADP-D-glycero-beta-D-manno-heptose.</text>
</comment>
<comment type="catalytic activity">
    <reaction evidence="1">
        <text>D-glycero-beta-D-manno-heptose 7-phosphate + ATP = D-glycero-beta-D-manno-heptose 1,7-bisphosphate + ADP + H(+)</text>
        <dbReference type="Rhea" id="RHEA:27473"/>
        <dbReference type="ChEBI" id="CHEBI:15378"/>
        <dbReference type="ChEBI" id="CHEBI:30616"/>
        <dbReference type="ChEBI" id="CHEBI:60204"/>
        <dbReference type="ChEBI" id="CHEBI:60208"/>
        <dbReference type="ChEBI" id="CHEBI:456216"/>
        <dbReference type="EC" id="2.7.1.167"/>
    </reaction>
</comment>
<comment type="catalytic activity">
    <reaction evidence="1">
        <text>D-glycero-beta-D-manno-heptose 1-phosphate + ATP + H(+) = ADP-D-glycero-beta-D-manno-heptose + diphosphate</text>
        <dbReference type="Rhea" id="RHEA:27465"/>
        <dbReference type="ChEBI" id="CHEBI:15378"/>
        <dbReference type="ChEBI" id="CHEBI:30616"/>
        <dbReference type="ChEBI" id="CHEBI:33019"/>
        <dbReference type="ChEBI" id="CHEBI:59967"/>
        <dbReference type="ChEBI" id="CHEBI:61593"/>
        <dbReference type="EC" id="2.7.7.70"/>
    </reaction>
</comment>
<comment type="pathway">
    <text evidence="1">Nucleotide-sugar biosynthesis; ADP-L-glycero-beta-D-manno-heptose biosynthesis; ADP-L-glycero-beta-D-manno-heptose from D-glycero-beta-D-manno-heptose 7-phosphate: step 1/4.</text>
</comment>
<comment type="pathway">
    <text evidence="1">Nucleotide-sugar biosynthesis; ADP-L-glycero-beta-D-manno-heptose biosynthesis; ADP-L-glycero-beta-D-manno-heptose from D-glycero-beta-D-manno-heptose 7-phosphate: step 3/4.</text>
</comment>
<comment type="subunit">
    <text evidence="1">Homodimer.</text>
</comment>
<comment type="similarity">
    <text evidence="1">In the N-terminal section; belongs to the carbohydrate kinase PfkB family.</text>
</comment>
<comment type="similarity">
    <text evidence="1">In the C-terminal section; belongs to the cytidylyltransferase family.</text>
</comment>
<sequence length="490" mass="52025">MNNFDTLLQSIARTTVVCVGDLMLDEFVYGEVSRISPEAPAPVIAVQRSEINVGGAGNVARNIAALGARCIFVGLIGDDEAGRTLNAELASEARIEPLLVCDPARPTTRKVRFVSEHFSTHMLRADWETAAAASAEIEQRLLDAILSQLERADIVLLSDYAKGVLTVRVIATVIEAARKLGKRVIVDPKSANFAIYRGATLLTPNRKEFVTATRCAADSMDEIATAAQEAIAFADCEAMLVTQSEHGMTLVPRAGEPIHVPAMPAKVRDVSGAGDTVAAVLAVALAAGADWGTAMRAASAAAAVAVSKNGTAVVTPAELRRKILPHASLAAEDKIIGSDAELDLRLAEWRRDGLRVGFTNGCFDILHPGHVKVLTAARGACDRLIVGLNSDASVRRLKGESRPVQNERARAEVLAALEAVDLVAIFEEDTPLKLITRIEPSVLVKGGDYTREQVVGHEIVAARGGEVLLIDVLPGFSTTSLVEKAREGTS</sequence>
<accession>Q2IZP7</accession>
<protein>
    <recommendedName>
        <fullName evidence="1">Bifunctional protein HldE</fullName>
    </recommendedName>
    <domain>
        <recommendedName>
            <fullName evidence="1">D-beta-D-heptose 7-phosphate kinase</fullName>
            <ecNumber evidence="1">2.7.1.167</ecNumber>
        </recommendedName>
        <alternativeName>
            <fullName evidence="1">D-beta-D-heptose 7-phosphotransferase</fullName>
        </alternativeName>
        <alternativeName>
            <fullName evidence="1">D-glycero-beta-D-manno-heptose-7-phosphate kinase</fullName>
        </alternativeName>
    </domain>
    <domain>
        <recommendedName>
            <fullName evidence="1">D-beta-D-heptose 1-phosphate adenylyltransferase</fullName>
            <ecNumber evidence="1">2.7.7.70</ecNumber>
        </recommendedName>
        <alternativeName>
            <fullName evidence="1">D-glycero-beta-D-manno-heptose 1-phosphate adenylyltransferase</fullName>
        </alternativeName>
    </domain>
</protein>
<proteinExistence type="inferred from homology"/>
<organism>
    <name type="scientific">Rhodopseudomonas palustris (strain HaA2)</name>
    <dbReference type="NCBI Taxonomy" id="316058"/>
    <lineage>
        <taxon>Bacteria</taxon>
        <taxon>Pseudomonadati</taxon>
        <taxon>Pseudomonadota</taxon>
        <taxon>Alphaproteobacteria</taxon>
        <taxon>Hyphomicrobiales</taxon>
        <taxon>Nitrobacteraceae</taxon>
        <taxon>Rhodopseudomonas</taxon>
    </lineage>
</organism>
<reference key="1">
    <citation type="submission" date="2006-01" db="EMBL/GenBank/DDBJ databases">
        <title>Complete sequence of Rhodopseudomonas palustris HaA2.</title>
        <authorList>
            <consortium name="US DOE Joint Genome Institute"/>
            <person name="Copeland A."/>
            <person name="Lucas S."/>
            <person name="Lapidus A."/>
            <person name="Barry K."/>
            <person name="Detter J.C."/>
            <person name="Glavina T."/>
            <person name="Hammon N."/>
            <person name="Israni S."/>
            <person name="Pitluck S."/>
            <person name="Chain P."/>
            <person name="Malfatti S."/>
            <person name="Shin M."/>
            <person name="Vergez L."/>
            <person name="Schmutz J."/>
            <person name="Larimer F."/>
            <person name="Land M."/>
            <person name="Hauser L."/>
            <person name="Pelletier D.A."/>
            <person name="Kyrpides N."/>
            <person name="Anderson I."/>
            <person name="Oda Y."/>
            <person name="Harwood C.S."/>
            <person name="Richardson P."/>
        </authorList>
    </citation>
    <scope>NUCLEOTIDE SEQUENCE [LARGE SCALE GENOMIC DNA]</scope>
    <source>
        <strain>HaA2</strain>
    </source>
</reference>